<comment type="function">
    <text evidence="6">Involved in actin patch polarization. Required for maintaining a proper budding pattern in yeast cells. Required for proper polarized localization of the ADP-ribosylation factor ARF3 at the plasma membrane.</text>
</comment>
<comment type="subunit">
    <text evidence="4 6">Interacts with ARF3 (in GTP-bound form). Interacts with CNM67.</text>
</comment>
<comment type="subcellular location">
    <subcellularLocation>
        <location>Cytoplasm</location>
        <location>Perinuclear region</location>
    </subcellularLocation>
    <subcellularLocation>
        <location>Cytoplasm</location>
        <location>Cell cortex</location>
    </subcellularLocation>
    <text>Enriched at the nuclear envelope and at the plasma membrane, especially in daughter cells and at the bud neck.</text>
</comment>
<comment type="induction">
    <text evidence="4 6">Mainly expressed in dividing cells, but not in stationary phase cells (at protein level).</text>
</comment>
<comment type="miscellaneous">
    <text evidence="5">Present with 768 molecules/cell in log phase SD medium.</text>
</comment>
<comment type="similarity">
    <text evidence="7">Belongs to the AFI1/mesA family.</text>
</comment>
<comment type="sequence caution" evidence="7">
    <conflict type="frameshift">
        <sequence resource="EMBL-CDS" id="CAA60863"/>
    </conflict>
</comment>
<organism>
    <name type="scientific">Saccharomyces cerevisiae (strain ATCC 204508 / S288c)</name>
    <name type="common">Baker's yeast</name>
    <dbReference type="NCBI Taxonomy" id="559292"/>
    <lineage>
        <taxon>Eukaryota</taxon>
        <taxon>Fungi</taxon>
        <taxon>Dikarya</taxon>
        <taxon>Ascomycota</taxon>
        <taxon>Saccharomycotina</taxon>
        <taxon>Saccharomycetes</taxon>
        <taxon>Saccharomycetales</taxon>
        <taxon>Saccharomycetaceae</taxon>
        <taxon>Saccharomyces</taxon>
    </lineage>
</organism>
<gene>
    <name type="primary">AFI1</name>
    <name type="ordered locus">YOR129C</name>
    <name type="ORF">YOR3296C</name>
</gene>
<accession>Q99222</accession>
<accession>D6W2I7</accession>
<accession>Q92274</accession>
<dbReference type="EMBL" id="X90518">
    <property type="protein sequence ID" value="CAA62121.1"/>
    <property type="molecule type" value="Genomic_DNA"/>
</dbReference>
<dbReference type="EMBL" id="X94335">
    <property type="protein sequence ID" value="CAA64048.1"/>
    <property type="molecule type" value="Genomic_DNA"/>
</dbReference>
<dbReference type="EMBL" id="Z75037">
    <property type="protein sequence ID" value="CAA99328.1"/>
    <property type="molecule type" value="Genomic_DNA"/>
</dbReference>
<dbReference type="EMBL" id="X87414">
    <property type="protein sequence ID" value="CAA60863.1"/>
    <property type="status" value="ALT_FRAME"/>
    <property type="molecule type" value="Genomic_DNA"/>
</dbReference>
<dbReference type="EMBL" id="BK006948">
    <property type="protein sequence ID" value="DAA10903.1"/>
    <property type="molecule type" value="Genomic_DNA"/>
</dbReference>
<dbReference type="PIR" id="S61000">
    <property type="entry name" value="S61000"/>
</dbReference>
<dbReference type="RefSeq" id="NP_014772.1">
    <property type="nucleotide sequence ID" value="NM_001183548.1"/>
</dbReference>
<dbReference type="BioGRID" id="34524">
    <property type="interactions" value="65"/>
</dbReference>
<dbReference type="FunCoup" id="Q99222">
    <property type="interactions" value="23"/>
</dbReference>
<dbReference type="IntAct" id="Q99222">
    <property type="interactions" value="2"/>
</dbReference>
<dbReference type="MINT" id="Q99222"/>
<dbReference type="STRING" id="4932.YOR129C"/>
<dbReference type="iPTMnet" id="Q99222"/>
<dbReference type="PaxDb" id="4932-YOR129C"/>
<dbReference type="PeptideAtlas" id="Q99222"/>
<dbReference type="EnsemblFungi" id="YOR129C_mRNA">
    <property type="protein sequence ID" value="YOR129C"/>
    <property type="gene ID" value="YOR129C"/>
</dbReference>
<dbReference type="GeneID" id="854296"/>
<dbReference type="KEGG" id="sce:YOR129C"/>
<dbReference type="AGR" id="SGD:S000005655"/>
<dbReference type="SGD" id="S000005655">
    <property type="gene designation" value="AFI1"/>
</dbReference>
<dbReference type="VEuPathDB" id="FungiDB:YOR129C"/>
<dbReference type="eggNOG" id="ENOG502QQUZ">
    <property type="taxonomic scope" value="Eukaryota"/>
</dbReference>
<dbReference type="HOGENOM" id="CLU_324667_0_0_1"/>
<dbReference type="InParanoid" id="Q99222"/>
<dbReference type="OMA" id="CFNMINS"/>
<dbReference type="OrthoDB" id="66409at2759"/>
<dbReference type="BioCyc" id="YEAST:G3O-33653-MONOMER"/>
<dbReference type="BioGRID-ORCS" id="854296">
    <property type="hits" value="0 hits in 10 CRISPR screens"/>
</dbReference>
<dbReference type="PRO" id="PR:Q99222"/>
<dbReference type="Proteomes" id="UP000002311">
    <property type="component" value="Chromosome XV"/>
</dbReference>
<dbReference type="RNAct" id="Q99222">
    <property type="molecule type" value="protein"/>
</dbReference>
<dbReference type="GO" id="GO:0005938">
    <property type="term" value="C:cell cortex"/>
    <property type="evidence" value="ECO:0007669"/>
    <property type="project" value="UniProtKB-SubCell"/>
</dbReference>
<dbReference type="GO" id="GO:0005935">
    <property type="term" value="C:cellular bud neck"/>
    <property type="evidence" value="ECO:0000314"/>
    <property type="project" value="SGD"/>
</dbReference>
<dbReference type="GO" id="GO:0005737">
    <property type="term" value="C:cytoplasm"/>
    <property type="evidence" value="ECO:0007005"/>
    <property type="project" value="SGD"/>
</dbReference>
<dbReference type="GO" id="GO:0005634">
    <property type="term" value="C:nucleus"/>
    <property type="evidence" value="ECO:0000315"/>
    <property type="project" value="SGD"/>
</dbReference>
<dbReference type="GO" id="GO:0048471">
    <property type="term" value="C:perinuclear region of cytoplasm"/>
    <property type="evidence" value="ECO:0007669"/>
    <property type="project" value="UniProtKB-SubCell"/>
</dbReference>
<dbReference type="GO" id="GO:0005886">
    <property type="term" value="C:plasma membrane"/>
    <property type="evidence" value="ECO:0000314"/>
    <property type="project" value="SGD"/>
</dbReference>
<dbReference type="GO" id="GO:0051666">
    <property type="term" value="P:actin cortical patch localization"/>
    <property type="evidence" value="ECO:0000315"/>
    <property type="project" value="SGD"/>
</dbReference>
<dbReference type="GO" id="GO:0000282">
    <property type="term" value="P:cellular bud site selection"/>
    <property type="evidence" value="ECO:0000315"/>
    <property type="project" value="SGD"/>
</dbReference>
<dbReference type="InterPro" id="IPR052809">
    <property type="entry name" value="Actin_polarity_regulatory"/>
</dbReference>
<dbReference type="InterPro" id="IPR012860">
    <property type="entry name" value="Afi1_N"/>
</dbReference>
<dbReference type="InterPro" id="IPR037516">
    <property type="entry name" value="Tripartite_DENN"/>
</dbReference>
<dbReference type="PANTHER" id="PTHR28245">
    <property type="entry name" value="ARF3-INTERACTING PROTEIN 1"/>
    <property type="match status" value="1"/>
</dbReference>
<dbReference type="PANTHER" id="PTHR28245:SF1">
    <property type="entry name" value="ARF3-INTERACTING PROTEIN 1"/>
    <property type="match status" value="1"/>
</dbReference>
<dbReference type="Pfam" id="PF07792">
    <property type="entry name" value="Afi1"/>
    <property type="match status" value="1"/>
</dbReference>
<dbReference type="Pfam" id="PF08616">
    <property type="entry name" value="SPA"/>
    <property type="match status" value="1"/>
</dbReference>
<dbReference type="PROSITE" id="PS50211">
    <property type="entry name" value="DENN"/>
    <property type="match status" value="1"/>
</dbReference>
<sequence length="893" mass="102250">MLRRELNNSISNRSIENESFPFERPNVSYIISAEFDNKLGPILKHQYPKDIPGFNQFSHEQRNGNTSVSMNLASLMIPSSIERNPGKQDITVFTLYYNKFTQNYQLFPVPKDPRFSFNLHHREQSDGSVTNSIYYDAENHQDAKNNRYTIVLEDDELECQEVQNNQKAIDNEPLFFINVANTVLDTTNDRGAVIKSIAIGTPLKTFFAFKNIIVLVLDLYMKAPTQAAATDILLDCFNMLNSIDLTLINDIHSKSSIQEVLHSIHDESIITKVFLDPDSTLKKLFCINGFDTKDKYGNIVTFHDQLIQYHFTRFQPKTLPPFLLKIPLQFNMIRREPIYIENDYNELVLKFLDKFVPYLLKAGQKVNAWKLVINSTKLSKEDLCAFILSLANITATYASDPQSYFKGNAALIFPYMDISLVDGLRAYVASNSDFVGCFAIIGTANPIFRYQLDIWDYYYDVDEGVFYENNSPEKEKPDTVAEVKIGPNPLRKIFNRPHFSTNAVNESQVNLGQKLFSLLIDEYHDSDTIMSVLRRLNVLQLENLLDALKRREIPPNIALKDEYIMFYKDFFIFPEFFDYFTLHSIELLSNLDNCLFSLGNTCQLFSTEQIYSQLSQILDIVKELFRMVSVSRTNIEKFLNACLNYSPFKILPTAQLHGDNISRWSFESEVRQGFDNFNSYMGIEKDPHGVIVSAIDLFTQIYSFDILAFFLTFITKESGQDLPFTKSLSRRRTYLTRIAQSSSLRQFLQLSTRPNIRILGGNGQGTGNSNYPEFTNASSVISPKLRASPLLERRASKICYAITKLLYRLECHPIGMALLKKYLHNQLREAYLESKRHFISKKGDSTNTSSTIASSSFAGASVPLSSNESGMLNGLKQINEQQESTLETTQKED</sequence>
<keyword id="KW-0175">Coiled coil</keyword>
<keyword id="KW-0963">Cytoplasm</keyword>
<keyword id="KW-1185">Reference proteome</keyword>
<proteinExistence type="evidence at protein level"/>
<feature type="chain" id="PRO_0000066256" description="ARF3-interacting protein 1">
    <location>
        <begin position="1"/>
        <end position="893"/>
    </location>
</feature>
<feature type="domain" description="uDENN" evidence="2">
    <location>
        <begin position="28"/>
        <end position="335"/>
    </location>
</feature>
<feature type="domain" description="cDENN" evidence="2">
    <location>
        <begin position="365"/>
        <end position="492"/>
    </location>
</feature>
<feature type="domain" description="dDENN" evidence="2">
    <location>
        <begin position="494"/>
        <end position="640"/>
    </location>
</feature>
<feature type="region of interest" description="Interaction with active ARF3">
    <location>
        <begin position="25"/>
        <end position="488"/>
    </location>
</feature>
<feature type="region of interest" description="Disordered" evidence="3">
    <location>
        <begin position="841"/>
        <end position="893"/>
    </location>
</feature>
<feature type="coiled-coil region" evidence="1">
    <location>
        <begin position="152"/>
        <end position="172"/>
    </location>
</feature>
<feature type="coiled-coil region" evidence="1">
    <location>
        <begin position="872"/>
        <end position="892"/>
    </location>
</feature>
<feature type="compositionally biased region" description="Low complexity" evidence="3">
    <location>
        <begin position="845"/>
        <end position="861"/>
    </location>
</feature>
<feature type="compositionally biased region" description="Polar residues" evidence="3">
    <location>
        <begin position="863"/>
        <end position="893"/>
    </location>
</feature>
<feature type="mutagenesis site" description="Abolishes interaction with ARF3." evidence="6">
    <original>KLGP</original>
    <variation>AAAA</variation>
    <location>
        <begin position="38"/>
        <end position="41"/>
    </location>
</feature>
<name>AFI1_YEAST</name>
<reference key="1">
    <citation type="journal article" date="1996" name="Yeast">
        <title>Sequencing and analysis of 51 kb on the right arm of chromosome XV from Saccharomyces cerevisiae reveals 30 open reading frames.</title>
        <authorList>
            <person name="Wiemann S."/>
            <person name="Rechmann S."/>
            <person name="Benes V."/>
            <person name="Voss H."/>
            <person name="Schwager C."/>
            <person name="Vlcek C."/>
            <person name="Stegemann J."/>
            <person name="Zimmermann J."/>
            <person name="Erfle H."/>
            <person name="Paces V."/>
            <person name="Ansorge W."/>
        </authorList>
    </citation>
    <scope>NUCLEOTIDE SEQUENCE [GENOMIC DNA]</scope>
    <source>
        <strain>ATCC 96604 / S288c / FY1679</strain>
    </source>
</reference>
<reference key="2">
    <citation type="journal article" date="1997" name="Yeast">
        <title>DNA sequencing and analysis of 130 kb from yeast chromosome XV.</title>
        <authorList>
            <person name="Voss H."/>
            <person name="Benes V."/>
            <person name="Andrade M.A."/>
            <person name="Valencia A."/>
            <person name="Rechmann S."/>
            <person name="Teodoru C."/>
            <person name="Schwager C."/>
            <person name="Paces V."/>
            <person name="Sander C."/>
            <person name="Ansorge W."/>
        </authorList>
    </citation>
    <scope>NUCLEOTIDE SEQUENCE [GENOMIC DNA]</scope>
</reference>
<reference key="3">
    <citation type="journal article" date="1997" name="Nature">
        <title>The nucleotide sequence of Saccharomyces cerevisiae chromosome XV.</title>
        <authorList>
            <person name="Dujon B."/>
            <person name="Albermann K."/>
            <person name="Aldea M."/>
            <person name="Alexandraki D."/>
            <person name="Ansorge W."/>
            <person name="Arino J."/>
            <person name="Benes V."/>
            <person name="Bohn C."/>
            <person name="Bolotin-Fukuhara M."/>
            <person name="Bordonne R."/>
            <person name="Boyer J."/>
            <person name="Camasses A."/>
            <person name="Casamayor A."/>
            <person name="Casas C."/>
            <person name="Cheret G."/>
            <person name="Cziepluch C."/>
            <person name="Daignan-Fornier B."/>
            <person name="Dang V.-D."/>
            <person name="de Haan M."/>
            <person name="Delius H."/>
            <person name="Durand P."/>
            <person name="Fairhead C."/>
            <person name="Feldmann H."/>
            <person name="Gaillon L."/>
            <person name="Galisson F."/>
            <person name="Gamo F.-J."/>
            <person name="Gancedo C."/>
            <person name="Goffeau A."/>
            <person name="Goulding S.E."/>
            <person name="Grivell L.A."/>
            <person name="Habbig B."/>
            <person name="Hand N.J."/>
            <person name="Hani J."/>
            <person name="Hattenhorst U."/>
            <person name="Hebling U."/>
            <person name="Hernando Y."/>
            <person name="Herrero E."/>
            <person name="Heumann K."/>
            <person name="Hiesel R."/>
            <person name="Hilger F."/>
            <person name="Hofmann B."/>
            <person name="Hollenberg C.P."/>
            <person name="Hughes B."/>
            <person name="Jauniaux J.-C."/>
            <person name="Kalogeropoulos A."/>
            <person name="Katsoulou C."/>
            <person name="Kordes E."/>
            <person name="Lafuente M.J."/>
            <person name="Landt O."/>
            <person name="Louis E.J."/>
            <person name="Maarse A.C."/>
            <person name="Madania A."/>
            <person name="Mannhaupt G."/>
            <person name="Marck C."/>
            <person name="Martin R.P."/>
            <person name="Mewes H.-W."/>
            <person name="Michaux G."/>
            <person name="Paces V."/>
            <person name="Parle-McDermott A.G."/>
            <person name="Pearson B.M."/>
            <person name="Perrin A."/>
            <person name="Pettersson B."/>
            <person name="Poch O."/>
            <person name="Pohl T.M."/>
            <person name="Poirey R."/>
            <person name="Portetelle D."/>
            <person name="Pujol A."/>
            <person name="Purnelle B."/>
            <person name="Ramezani Rad M."/>
            <person name="Rechmann S."/>
            <person name="Schwager C."/>
            <person name="Schweizer M."/>
            <person name="Sor F."/>
            <person name="Sterky F."/>
            <person name="Tarassov I.A."/>
            <person name="Teodoru C."/>
            <person name="Tettelin H."/>
            <person name="Thierry A."/>
            <person name="Tobiasch E."/>
            <person name="Tzermia M."/>
            <person name="Uhlen M."/>
            <person name="Unseld M."/>
            <person name="Valens M."/>
            <person name="Vandenbol M."/>
            <person name="Vetter I."/>
            <person name="Vlcek C."/>
            <person name="Voet M."/>
            <person name="Volckaert G."/>
            <person name="Voss H."/>
            <person name="Wambutt R."/>
            <person name="Wedler H."/>
            <person name="Wiemann S."/>
            <person name="Winsor B."/>
            <person name="Wolfe K.H."/>
            <person name="Zollner A."/>
            <person name="Zumstein E."/>
            <person name="Kleine K."/>
        </authorList>
    </citation>
    <scope>NUCLEOTIDE SEQUENCE [LARGE SCALE GENOMIC DNA]</scope>
    <source>
        <strain>ATCC 204508 / S288c</strain>
    </source>
</reference>
<reference key="4">
    <citation type="journal article" date="2014" name="G3 (Bethesda)">
        <title>The reference genome sequence of Saccharomyces cerevisiae: Then and now.</title>
        <authorList>
            <person name="Engel S.R."/>
            <person name="Dietrich F.S."/>
            <person name="Fisk D.G."/>
            <person name="Binkley G."/>
            <person name="Balakrishnan R."/>
            <person name="Costanzo M.C."/>
            <person name="Dwight S.S."/>
            <person name="Hitz B.C."/>
            <person name="Karra K."/>
            <person name="Nash R.S."/>
            <person name="Weng S."/>
            <person name="Wong E.D."/>
            <person name="Lloyd P."/>
            <person name="Skrzypek M.S."/>
            <person name="Miyasato S.R."/>
            <person name="Simison M."/>
            <person name="Cherry J.M."/>
        </authorList>
    </citation>
    <scope>GENOME REANNOTATION</scope>
    <source>
        <strain>ATCC 204508 / S288c</strain>
    </source>
</reference>
<reference key="5">
    <citation type="journal article" date="1996" name="J. Biol. Chem.">
        <title>The ARG11 gene of Saccharomyces cerevisiae encodes a mitochondrial integral membrane protein required for arginine biosynthesis.</title>
        <authorList>
            <person name="Crabeel M."/>
            <person name="Soetens O."/>
            <person name="de Rijcke M."/>
            <person name="Pratiwi R."/>
            <person name="Pankiewicz R."/>
        </authorList>
    </citation>
    <scope>NUCLEOTIDE SEQUENCE [GENOMIC DNA] OF 1-157</scope>
    <source>
        <strain>ATCC 28383 / FL100 / VTT C-80102</strain>
    </source>
</reference>
<reference key="6">
    <citation type="journal article" date="2003" name="Acta Biochim. Pol.">
        <title>YOR129c, a new element interacting with Cnm67p, a component of the spindle pole body of Saccharomyces cerevisiae.</title>
        <authorList>
            <person name="Wysocka M."/>
            <person name="Bialkowska A."/>
            <person name="Micialkiewicz A."/>
            <person name="Kurlandzka A."/>
        </authorList>
    </citation>
    <scope>SUBCELLULAR LOCATION</scope>
    <scope>INTERACTION WITH CNM67</scope>
    <scope>INDUCTION</scope>
</reference>
<reference key="7">
    <citation type="journal article" date="2003" name="Nature">
        <title>Global analysis of protein expression in yeast.</title>
        <authorList>
            <person name="Ghaemmaghami S."/>
            <person name="Huh W.-K."/>
            <person name="Bower K."/>
            <person name="Howson R.W."/>
            <person name="Belle A."/>
            <person name="Dephoure N."/>
            <person name="O'Shea E.K."/>
            <person name="Weissman J.S."/>
        </authorList>
    </citation>
    <scope>LEVEL OF PROTEIN EXPRESSION [LARGE SCALE ANALYSIS]</scope>
</reference>
<reference key="8">
    <citation type="journal article" date="2008" name="J. Biol. Chem.">
        <title>Afi1p functions as an Arf3p polarization-specific docking factor for development of polarity.</title>
        <authorList>
            <person name="Tsai P.-C."/>
            <person name="Lee S.-W."/>
            <person name="Liu Y.-W."/>
            <person name="Chu C.-W."/>
            <person name="Chen K.-Y."/>
            <person name="Ho J.-C."/>
            <person name="Lee F.-J."/>
        </authorList>
    </citation>
    <scope>FUNCTION</scope>
    <scope>INTERACTION WITH ARF3</scope>
    <scope>INDUCTION</scope>
    <scope>SUBCELLULAR LOCATION</scope>
    <scope>MUTAGENESIS OF 38-LYS--PRO-41</scope>
</reference>
<protein>
    <recommendedName>
        <fullName>ARF3-interacting protein 1</fullName>
    </recommendedName>
</protein>
<evidence type="ECO:0000255" key="1"/>
<evidence type="ECO:0000255" key="2">
    <source>
        <dbReference type="PROSITE-ProRule" id="PRU00304"/>
    </source>
</evidence>
<evidence type="ECO:0000256" key="3">
    <source>
        <dbReference type="SAM" id="MobiDB-lite"/>
    </source>
</evidence>
<evidence type="ECO:0000269" key="4">
    <source>
    </source>
</evidence>
<evidence type="ECO:0000269" key="5">
    <source>
    </source>
</evidence>
<evidence type="ECO:0000269" key="6">
    <source>
    </source>
</evidence>
<evidence type="ECO:0000305" key="7"/>